<protein>
    <recommendedName>
        <fullName evidence="1">UPF0637 protein LMHCC_1566</fullName>
    </recommendedName>
</protein>
<organism>
    <name type="scientific">Listeria monocytogenes serotype 4a (strain HCC23)</name>
    <dbReference type="NCBI Taxonomy" id="552536"/>
    <lineage>
        <taxon>Bacteria</taxon>
        <taxon>Bacillati</taxon>
        <taxon>Bacillota</taxon>
        <taxon>Bacilli</taxon>
        <taxon>Bacillales</taxon>
        <taxon>Listeriaceae</taxon>
        <taxon>Listeria</taxon>
    </lineage>
</organism>
<sequence>MTFKGFSKKDFKTMQIPGLEARMSGIQTDIQPKFRAVGEELTTYLSAKLGDEMFLHIARHQRRSVNPPESTWLAICHDKRGYKKHPHFQVGLFDNYLFIWLAFIYENEESKKIANRFLKEKKLLADLPDSFAISPDHTEEKTYPVHDGQLKATLERFRDVKKGEFLVGKIYLPDDSHLSPGKDFIKEAEMVLDELIPLYKASLQ</sequence>
<feature type="chain" id="PRO_1000188674" description="UPF0637 protein LMHCC_1566">
    <location>
        <begin position="1"/>
        <end position="204"/>
    </location>
</feature>
<dbReference type="EMBL" id="CP001175">
    <property type="protein sequence ID" value="ACK39910.1"/>
    <property type="molecule type" value="Genomic_DNA"/>
</dbReference>
<dbReference type="RefSeq" id="WP_012581579.1">
    <property type="nucleotide sequence ID" value="NC_011660.1"/>
</dbReference>
<dbReference type="SMR" id="B8DCE7"/>
<dbReference type="KEGG" id="lmh:LMHCC_1566"/>
<dbReference type="HOGENOM" id="CLU_096059_0_0_9"/>
<dbReference type="Gene3D" id="3.30.930.20">
    <property type="entry name" value="Protein of unknown function DUF1054"/>
    <property type="match status" value="1"/>
</dbReference>
<dbReference type="HAMAP" id="MF_01851">
    <property type="entry name" value="UPF0637"/>
    <property type="match status" value="1"/>
</dbReference>
<dbReference type="InterPro" id="IPR009403">
    <property type="entry name" value="UPF0637"/>
</dbReference>
<dbReference type="InterPro" id="IPR053707">
    <property type="entry name" value="UPF0637_domain_sf"/>
</dbReference>
<dbReference type="Pfam" id="PF06335">
    <property type="entry name" value="DUF1054"/>
    <property type="match status" value="1"/>
</dbReference>
<dbReference type="PIRSF" id="PIRSF021332">
    <property type="entry name" value="DUF1054"/>
    <property type="match status" value="1"/>
</dbReference>
<dbReference type="SUPFAM" id="SSF142913">
    <property type="entry name" value="YktB/PF0168-like"/>
    <property type="match status" value="1"/>
</dbReference>
<reference key="1">
    <citation type="journal article" date="2011" name="J. Bacteriol.">
        <title>Genome sequence of lineage III Listeria monocytogenes strain HCC23.</title>
        <authorList>
            <person name="Steele C.L."/>
            <person name="Donaldson J.R."/>
            <person name="Paul D."/>
            <person name="Banes M.M."/>
            <person name="Arick T."/>
            <person name="Bridges S.M."/>
            <person name="Lawrence M.L."/>
        </authorList>
    </citation>
    <scope>NUCLEOTIDE SEQUENCE [LARGE SCALE GENOMIC DNA]</scope>
    <source>
        <strain>HCC23</strain>
    </source>
</reference>
<accession>B8DCE7</accession>
<proteinExistence type="inferred from homology"/>
<comment type="similarity">
    <text evidence="1">Belongs to the UPF0637 family.</text>
</comment>
<evidence type="ECO:0000255" key="1">
    <source>
        <dbReference type="HAMAP-Rule" id="MF_01851"/>
    </source>
</evidence>
<name>Y1566_LISMH</name>
<gene>
    <name type="ordered locus">LMHCC_1566</name>
</gene>